<dbReference type="EC" id="2.7.7.85" evidence="1"/>
<dbReference type="EMBL" id="AM408590">
    <property type="protein sequence ID" value="CAL73640.1"/>
    <property type="molecule type" value="Genomic_DNA"/>
</dbReference>
<dbReference type="RefSeq" id="WP_010950916.1">
    <property type="nucleotide sequence ID" value="NC_008769.1"/>
</dbReference>
<dbReference type="SMR" id="A1KPS2"/>
<dbReference type="KEGG" id="mbb:BCG_3651"/>
<dbReference type="HOGENOM" id="CLU_787128_0_0_11"/>
<dbReference type="Proteomes" id="UP000001472">
    <property type="component" value="Chromosome"/>
</dbReference>
<dbReference type="GO" id="GO:0004016">
    <property type="term" value="F:adenylate cyclase activity"/>
    <property type="evidence" value="ECO:0007669"/>
    <property type="project" value="TreeGrafter"/>
</dbReference>
<dbReference type="GO" id="GO:0005524">
    <property type="term" value="F:ATP binding"/>
    <property type="evidence" value="ECO:0007669"/>
    <property type="project" value="UniProtKB-UniRule"/>
</dbReference>
<dbReference type="GO" id="GO:0106408">
    <property type="term" value="F:diadenylate cyclase activity"/>
    <property type="evidence" value="ECO:0007669"/>
    <property type="project" value="UniProtKB-EC"/>
</dbReference>
<dbReference type="GO" id="GO:0003677">
    <property type="term" value="F:DNA binding"/>
    <property type="evidence" value="ECO:0007669"/>
    <property type="project" value="UniProtKB-UniRule"/>
</dbReference>
<dbReference type="GO" id="GO:0006281">
    <property type="term" value="P:DNA repair"/>
    <property type="evidence" value="ECO:0007669"/>
    <property type="project" value="UniProtKB-UniRule"/>
</dbReference>
<dbReference type="FunFam" id="1.10.150.20:FF:000016">
    <property type="entry name" value="DNA integrity scanning protein DisA"/>
    <property type="match status" value="1"/>
</dbReference>
<dbReference type="FunFam" id="1.20.1260.110:FF:000002">
    <property type="entry name" value="DNA integrity scanning protein DisA"/>
    <property type="match status" value="1"/>
</dbReference>
<dbReference type="FunFam" id="3.40.1700.10:FF:000001">
    <property type="entry name" value="DNA integrity scanning protein DisA"/>
    <property type="match status" value="1"/>
</dbReference>
<dbReference type="Gene3D" id="1.10.150.20">
    <property type="entry name" value="5' to 3' exonuclease, C-terminal subdomain"/>
    <property type="match status" value="1"/>
</dbReference>
<dbReference type="Gene3D" id="1.20.1260.110">
    <property type="entry name" value="DNA integrity scanning linker region"/>
    <property type="match status" value="1"/>
</dbReference>
<dbReference type="Gene3D" id="3.40.1700.10">
    <property type="entry name" value="DNA integrity scanning protein, DisA, N-terminal domain"/>
    <property type="match status" value="1"/>
</dbReference>
<dbReference type="HAMAP" id="MF_01438">
    <property type="entry name" value="DisA"/>
    <property type="match status" value="1"/>
</dbReference>
<dbReference type="InterPro" id="IPR050338">
    <property type="entry name" value="DisA"/>
</dbReference>
<dbReference type="InterPro" id="IPR038331">
    <property type="entry name" value="DisA_sf"/>
</dbReference>
<dbReference type="InterPro" id="IPR036888">
    <property type="entry name" value="DNA_integrity_DisA_N_sf"/>
</dbReference>
<dbReference type="InterPro" id="IPR018906">
    <property type="entry name" value="DNA_integrity_scan_DisA_link"/>
</dbReference>
<dbReference type="InterPro" id="IPR003390">
    <property type="entry name" value="DNA_integrity_scan_DisA_N"/>
</dbReference>
<dbReference type="InterPro" id="IPR023763">
    <property type="entry name" value="DNA_integrity_scanning_protein"/>
</dbReference>
<dbReference type="InterPro" id="IPR010994">
    <property type="entry name" value="RuvA_2-like"/>
</dbReference>
<dbReference type="NCBIfam" id="NF010009">
    <property type="entry name" value="PRK13482.1"/>
    <property type="match status" value="1"/>
</dbReference>
<dbReference type="PANTHER" id="PTHR34185">
    <property type="entry name" value="DIADENYLATE CYCLASE"/>
    <property type="match status" value="1"/>
</dbReference>
<dbReference type="PANTHER" id="PTHR34185:SF3">
    <property type="entry name" value="DNA INTEGRITY SCANNING PROTEIN DISA"/>
    <property type="match status" value="1"/>
</dbReference>
<dbReference type="Pfam" id="PF02457">
    <property type="entry name" value="DAC"/>
    <property type="match status" value="1"/>
</dbReference>
<dbReference type="Pfam" id="PF10635">
    <property type="entry name" value="DisA-linker"/>
    <property type="match status" value="1"/>
</dbReference>
<dbReference type="SUPFAM" id="SSF47781">
    <property type="entry name" value="RuvA domain 2-like"/>
    <property type="match status" value="1"/>
</dbReference>
<dbReference type="SUPFAM" id="SSF143597">
    <property type="entry name" value="YojJ-like"/>
    <property type="match status" value="1"/>
</dbReference>
<dbReference type="PROSITE" id="PS51794">
    <property type="entry name" value="DAC"/>
    <property type="match status" value="1"/>
</dbReference>
<comment type="function">
    <text evidence="1">Participates in a DNA-damage check-point. DisA forms globular foci that rapidly scan along the chromosomes searching for lesions.</text>
</comment>
<comment type="function">
    <text evidence="1">Also has diadenylate cyclase activity, catalyzing the condensation of 2 ATP molecules into cyclic di-AMP (c-di-AMP). c-di-AMP likely acts as a signaling molecule that may couple DNA integrity with a cellular process.</text>
</comment>
<comment type="catalytic activity">
    <reaction evidence="1">
        <text>2 ATP = 3',3'-c-di-AMP + 2 diphosphate</text>
        <dbReference type="Rhea" id="RHEA:35655"/>
        <dbReference type="ChEBI" id="CHEBI:30616"/>
        <dbReference type="ChEBI" id="CHEBI:33019"/>
        <dbReference type="ChEBI" id="CHEBI:71500"/>
        <dbReference type="EC" id="2.7.7.85"/>
    </reaction>
</comment>
<comment type="cofactor">
    <cofactor evidence="1">
        <name>Mg(2+)</name>
        <dbReference type="ChEBI" id="CHEBI:18420"/>
    </cofactor>
</comment>
<comment type="subunit">
    <text evidence="1">Homooctamer.</text>
</comment>
<comment type="similarity">
    <text evidence="1">Belongs to the DisA family.</text>
</comment>
<sequence length="358" mass="38987">MHAVTRPTLREAVARLAPGTGLRDGLERILRGRTGALIVLGHDENVEAICDGGFSLDVRYAATRLRELCKMDGAVVLSTDGSRIVRANVQLVPDPSIPTDESGTRHRSAERAAIQTGYPVISVSHSMNIVTVYVRGERHVLTDSATILSRANQAIATLERYKTRLDEVSRQLSRAEIEDFVTLRDVMTVVQRLELVRRIGLVIDYDVVELGTDGRQLRLQLDELLGGNDTARELIVRDYHANPEPPSTGQINATLDELDALSDGDLLDFTALAKVFGYPTTTEAQDSALSPRGYRAMAGIPRLQFAHADLLVRAFGTLQGLLAASAGDLQSVDGIGAMWARHVRDGLSQLAESTISDQ</sequence>
<protein>
    <recommendedName>
        <fullName evidence="1">DNA integrity scanning protein DisA</fullName>
    </recommendedName>
    <alternativeName>
        <fullName evidence="1">Cyclic di-AMP synthase</fullName>
        <shortName evidence="1">c-di-AMP synthase</shortName>
    </alternativeName>
    <alternativeName>
        <fullName evidence="1">Diadenylate cyclase</fullName>
        <ecNumber evidence="1">2.7.7.85</ecNumber>
    </alternativeName>
</protein>
<keyword id="KW-0067">ATP-binding</keyword>
<keyword id="KW-0227">DNA damage</keyword>
<keyword id="KW-0234">DNA repair</keyword>
<keyword id="KW-0238">DNA-binding</keyword>
<keyword id="KW-0460">Magnesium</keyword>
<keyword id="KW-0547">Nucleotide-binding</keyword>
<keyword id="KW-0548">Nucleotidyltransferase</keyword>
<keyword id="KW-0808">Transferase</keyword>
<organism>
    <name type="scientific">Mycobacterium bovis (strain BCG / Pasteur 1173P2)</name>
    <dbReference type="NCBI Taxonomy" id="410289"/>
    <lineage>
        <taxon>Bacteria</taxon>
        <taxon>Bacillati</taxon>
        <taxon>Actinomycetota</taxon>
        <taxon>Actinomycetes</taxon>
        <taxon>Mycobacteriales</taxon>
        <taxon>Mycobacteriaceae</taxon>
        <taxon>Mycobacterium</taxon>
        <taxon>Mycobacterium tuberculosis complex</taxon>
    </lineage>
</organism>
<accession>A1KPS2</accession>
<evidence type="ECO:0000255" key="1">
    <source>
        <dbReference type="HAMAP-Rule" id="MF_01438"/>
    </source>
</evidence>
<evidence type="ECO:0000255" key="2">
    <source>
        <dbReference type="PROSITE-ProRule" id="PRU01130"/>
    </source>
</evidence>
<feature type="chain" id="PRO_1000017373" description="DNA integrity scanning protein DisA">
    <location>
        <begin position="1"/>
        <end position="358"/>
    </location>
</feature>
<feature type="domain" description="DAC" evidence="2">
    <location>
        <begin position="6"/>
        <end position="144"/>
    </location>
</feature>
<feature type="binding site" evidence="1">
    <location>
        <position position="73"/>
    </location>
    <ligand>
        <name>ATP</name>
        <dbReference type="ChEBI" id="CHEBI:30616"/>
    </ligand>
</feature>
<feature type="binding site" evidence="1">
    <location>
        <position position="91"/>
    </location>
    <ligand>
        <name>ATP</name>
        <dbReference type="ChEBI" id="CHEBI:30616"/>
    </ligand>
</feature>
<feature type="binding site" evidence="1">
    <location>
        <begin position="104"/>
        <end position="108"/>
    </location>
    <ligand>
        <name>ATP</name>
        <dbReference type="ChEBI" id="CHEBI:30616"/>
    </ligand>
</feature>
<gene>
    <name evidence="1" type="primary">disA</name>
    <name type="ordered locus">BCG_3651</name>
</gene>
<name>DISA_MYCBP</name>
<proteinExistence type="inferred from homology"/>
<reference key="1">
    <citation type="journal article" date="2007" name="Proc. Natl. Acad. Sci. U.S.A.">
        <title>Genome plasticity of BCG and impact on vaccine efficacy.</title>
        <authorList>
            <person name="Brosch R."/>
            <person name="Gordon S.V."/>
            <person name="Garnier T."/>
            <person name="Eiglmeier K."/>
            <person name="Frigui W."/>
            <person name="Valenti P."/>
            <person name="Dos Santos S."/>
            <person name="Duthoy S."/>
            <person name="Lacroix C."/>
            <person name="Garcia-Pelayo C."/>
            <person name="Inwald J.K."/>
            <person name="Golby P."/>
            <person name="Garcia J.N."/>
            <person name="Hewinson R.G."/>
            <person name="Behr M.A."/>
            <person name="Quail M.A."/>
            <person name="Churcher C."/>
            <person name="Barrell B.G."/>
            <person name="Parkhill J."/>
            <person name="Cole S.T."/>
        </authorList>
    </citation>
    <scope>NUCLEOTIDE SEQUENCE [LARGE SCALE GENOMIC DNA]</scope>
    <source>
        <strain>BCG / Pasteur 1173P2</strain>
    </source>
</reference>